<keyword id="KW-0010">Activator</keyword>
<keyword id="KW-0114">cAMP</keyword>
<keyword id="KW-0116">cAMP-binding</keyword>
<keyword id="KW-0963">Cytoplasm</keyword>
<keyword id="KW-0238">DNA-binding</keyword>
<keyword id="KW-0547">Nucleotide-binding</keyword>
<keyword id="KW-0804">Transcription</keyword>
<keyword id="KW-0805">Transcription regulation</keyword>
<organism>
    <name type="scientific">Staphylococcus aureus (strain COL)</name>
    <dbReference type="NCBI Taxonomy" id="93062"/>
    <lineage>
        <taxon>Bacteria</taxon>
        <taxon>Bacillati</taxon>
        <taxon>Bacillota</taxon>
        <taxon>Bacilli</taxon>
        <taxon>Bacillales</taxon>
        <taxon>Staphylococcaceae</taxon>
        <taxon>Staphylococcus</taxon>
    </lineage>
</organism>
<gene>
    <name type="primary">arcR</name>
    <name type="ordered locus">SACOL2653</name>
</gene>
<dbReference type="EMBL" id="CP000046">
    <property type="protein sequence ID" value="AAW38651.1"/>
    <property type="status" value="ALT_INIT"/>
    <property type="molecule type" value="Genomic_DNA"/>
</dbReference>
<dbReference type="RefSeq" id="WP_000138214.1">
    <property type="nucleotide sequence ID" value="NZ_JBGOFO010000001.1"/>
</dbReference>
<dbReference type="SMR" id="Q5HCR6"/>
<dbReference type="KEGG" id="sac:SACOL2653"/>
<dbReference type="HOGENOM" id="CLU_1160528_0_0_9"/>
<dbReference type="Proteomes" id="UP000000530">
    <property type="component" value="Chromosome"/>
</dbReference>
<dbReference type="GO" id="GO:0005737">
    <property type="term" value="C:cytoplasm"/>
    <property type="evidence" value="ECO:0007669"/>
    <property type="project" value="UniProtKB-SubCell"/>
</dbReference>
<dbReference type="GO" id="GO:0030552">
    <property type="term" value="F:cAMP binding"/>
    <property type="evidence" value="ECO:0007669"/>
    <property type="project" value="UniProtKB-KW"/>
</dbReference>
<dbReference type="GO" id="GO:0003677">
    <property type="term" value="F:DNA binding"/>
    <property type="evidence" value="ECO:0007669"/>
    <property type="project" value="UniProtKB-KW"/>
</dbReference>
<dbReference type="GO" id="GO:0006355">
    <property type="term" value="P:regulation of DNA-templated transcription"/>
    <property type="evidence" value="ECO:0007669"/>
    <property type="project" value="InterPro"/>
</dbReference>
<dbReference type="Gene3D" id="2.60.120.10">
    <property type="entry name" value="Jelly Rolls"/>
    <property type="match status" value="1"/>
</dbReference>
<dbReference type="Gene3D" id="1.10.10.10">
    <property type="entry name" value="Winged helix-like DNA-binding domain superfamily/Winged helix DNA-binding domain"/>
    <property type="match status" value="1"/>
</dbReference>
<dbReference type="InterPro" id="IPR000595">
    <property type="entry name" value="cNMP-bd_dom"/>
</dbReference>
<dbReference type="InterPro" id="IPR018490">
    <property type="entry name" value="cNMP-bd_dom_sf"/>
</dbReference>
<dbReference type="InterPro" id="IPR012318">
    <property type="entry name" value="HTH_CRP"/>
</dbReference>
<dbReference type="InterPro" id="IPR014710">
    <property type="entry name" value="RmlC-like_jellyroll"/>
</dbReference>
<dbReference type="InterPro" id="IPR036388">
    <property type="entry name" value="WH-like_DNA-bd_sf"/>
</dbReference>
<dbReference type="InterPro" id="IPR036390">
    <property type="entry name" value="WH_DNA-bd_sf"/>
</dbReference>
<dbReference type="Pfam" id="PF00027">
    <property type="entry name" value="cNMP_binding"/>
    <property type="match status" value="1"/>
</dbReference>
<dbReference type="Pfam" id="PF13545">
    <property type="entry name" value="HTH_Crp_2"/>
    <property type="match status" value="1"/>
</dbReference>
<dbReference type="SUPFAM" id="SSF51206">
    <property type="entry name" value="cAMP-binding domain-like"/>
    <property type="match status" value="1"/>
</dbReference>
<dbReference type="SUPFAM" id="SSF46785">
    <property type="entry name" value="Winged helix' DNA-binding domain"/>
    <property type="match status" value="1"/>
</dbReference>
<evidence type="ECO:0000250" key="1"/>
<evidence type="ECO:0000305" key="2"/>
<accession>Q5HCR6</accession>
<comment type="function">
    <text evidence="1">Positively regulates the expression of the arcABDCR operon under anaerobic conditions, thus playing an essential role in arginine catabolism. May also control the expression of genes encoding proteins which are involved in anaerobic metabolism. Can bind cyclic AMP (By similarity).</text>
</comment>
<comment type="subcellular location">
    <subcellularLocation>
        <location evidence="1">Cytoplasm</location>
    </subcellularLocation>
</comment>
<comment type="sequence caution" evidence="2">
    <conflict type="erroneous initiation">
        <sequence resource="EMBL-CDS" id="AAW38651"/>
    </conflict>
</comment>
<proteinExistence type="inferred from homology"/>
<reference key="1">
    <citation type="journal article" date="2005" name="J. Bacteriol.">
        <title>Insights on evolution of virulence and resistance from the complete genome analysis of an early methicillin-resistant Staphylococcus aureus strain and a biofilm-producing methicillin-resistant Staphylococcus epidermidis strain.</title>
        <authorList>
            <person name="Gill S.R."/>
            <person name="Fouts D.E."/>
            <person name="Archer G.L."/>
            <person name="Mongodin E.F."/>
            <person name="DeBoy R.T."/>
            <person name="Ravel J."/>
            <person name="Paulsen I.T."/>
            <person name="Kolonay J.F."/>
            <person name="Brinkac L.M."/>
            <person name="Beanan M.J."/>
            <person name="Dodson R.J."/>
            <person name="Daugherty S.C."/>
            <person name="Madupu R."/>
            <person name="Angiuoli S.V."/>
            <person name="Durkin A.S."/>
            <person name="Haft D.H."/>
            <person name="Vamathevan J.J."/>
            <person name="Khouri H."/>
            <person name="Utterback T.R."/>
            <person name="Lee C."/>
            <person name="Dimitrov G."/>
            <person name="Jiang L."/>
            <person name="Qin H."/>
            <person name="Weidman J."/>
            <person name="Tran K."/>
            <person name="Kang K.H."/>
            <person name="Hance I.R."/>
            <person name="Nelson K.E."/>
            <person name="Fraser C.M."/>
        </authorList>
    </citation>
    <scope>NUCLEOTIDE SEQUENCE [LARGE SCALE GENOMIC DNA]</scope>
    <source>
        <strain>COL</strain>
    </source>
</reference>
<protein>
    <recommendedName>
        <fullName>HTH-type transcriptional regulator ArcR</fullName>
    </recommendedName>
</protein>
<feature type="chain" id="PRO_0000349405" description="HTH-type transcriptional regulator ArcR">
    <location>
        <begin position="1"/>
        <end position="234"/>
    </location>
</feature>
<feature type="domain" description="HTH crp-type">
    <location>
        <begin position="155"/>
        <end position="228"/>
    </location>
</feature>
<feature type="DNA-binding region" description="H-T-H motif" evidence="1">
    <location>
        <begin position="188"/>
        <end position="207"/>
    </location>
</feature>
<feature type="binding site">
    <location>
        <begin position="40"/>
        <end position="129"/>
    </location>
    <ligand>
        <name>a nucleoside 3',5'-cyclic phosphate</name>
        <dbReference type="ChEBI" id="CHEBI:58464"/>
    </ligand>
</feature>
<name>ARCR_STAAC</name>
<sequence>MTENFILGRNNKLEHELKALADYINIPYSILQPYQSECFVRHYTKGQVIYFSPQESSNIYFLIEGNIIREHYNQNGDVYRYFNKEQVLFPISNLFHPKEVNELCTALTDCTVLGLPRELMAFLCKANDDIFLTLFALINDNEQQHMNYNMALTSKFAKDRIIKLICHLCQTVGYDQDEFYEIKQFLTIQLMSDMAGISRETAGHIIHELKDEKLVVKDHKNWLVSKHLFNDVCV</sequence>